<protein>
    <recommendedName>
        <fullName evidence="1">DNA-directed RNA polymerase subunit beta'</fullName>
        <shortName evidence="1">RNAP subunit beta'</shortName>
        <ecNumber evidence="1">2.7.7.6</ecNumber>
    </recommendedName>
    <alternativeName>
        <fullName evidence="1">RNA polymerase subunit beta'</fullName>
    </alternativeName>
    <alternativeName>
        <fullName evidence="1">Transcriptase subunit beta'</fullName>
    </alternativeName>
</protein>
<name>RPOC_CAMJE</name>
<comment type="function">
    <text evidence="1">DNA-dependent RNA polymerase catalyzes the transcription of DNA into RNA using the four ribonucleoside triphosphates as substrates.</text>
</comment>
<comment type="catalytic activity">
    <reaction evidence="1">
        <text>RNA(n) + a ribonucleoside 5'-triphosphate = RNA(n+1) + diphosphate</text>
        <dbReference type="Rhea" id="RHEA:21248"/>
        <dbReference type="Rhea" id="RHEA-COMP:14527"/>
        <dbReference type="Rhea" id="RHEA-COMP:17342"/>
        <dbReference type="ChEBI" id="CHEBI:33019"/>
        <dbReference type="ChEBI" id="CHEBI:61557"/>
        <dbReference type="ChEBI" id="CHEBI:140395"/>
        <dbReference type="EC" id="2.7.7.6"/>
    </reaction>
</comment>
<comment type="cofactor">
    <cofactor evidence="1">
        <name>Mg(2+)</name>
        <dbReference type="ChEBI" id="CHEBI:18420"/>
    </cofactor>
    <text evidence="1">Binds 1 Mg(2+) ion per subunit.</text>
</comment>
<comment type="cofactor">
    <cofactor evidence="1">
        <name>Zn(2+)</name>
        <dbReference type="ChEBI" id="CHEBI:29105"/>
    </cofactor>
    <text evidence="1">Binds 2 Zn(2+) ions per subunit.</text>
</comment>
<comment type="subunit">
    <text evidence="1">The RNAP catalytic core consists of 2 alpha, 1 beta, 1 beta' and 1 omega subunit. When a sigma factor is associated with the core the holoenzyme is formed, which can initiate transcription.</text>
</comment>
<comment type="similarity">
    <text evidence="1">Belongs to the RNA polymerase beta' chain family.</text>
</comment>
<proteinExistence type="inferred from homology"/>
<reference key="1">
    <citation type="journal article" date="2000" name="Nature">
        <title>The genome sequence of the food-borne pathogen Campylobacter jejuni reveals hypervariable sequences.</title>
        <authorList>
            <person name="Parkhill J."/>
            <person name="Wren B.W."/>
            <person name="Mungall K.L."/>
            <person name="Ketley J.M."/>
            <person name="Churcher C.M."/>
            <person name="Basham D."/>
            <person name="Chillingworth T."/>
            <person name="Davies R.M."/>
            <person name="Feltwell T."/>
            <person name="Holroyd S."/>
            <person name="Jagels K."/>
            <person name="Karlyshev A.V."/>
            <person name="Moule S."/>
            <person name="Pallen M.J."/>
            <person name="Penn C.W."/>
            <person name="Quail M.A."/>
            <person name="Rajandream M.A."/>
            <person name="Rutherford K.M."/>
            <person name="van Vliet A.H.M."/>
            <person name="Whitehead S."/>
            <person name="Barrell B.G."/>
        </authorList>
    </citation>
    <scope>NUCLEOTIDE SEQUENCE [LARGE SCALE GENOMIC DNA]</scope>
    <source>
        <strain>ATCC 700819 / NCTC 11168</strain>
    </source>
</reference>
<organism>
    <name type="scientific">Campylobacter jejuni subsp. jejuni serotype O:2 (strain ATCC 700819 / NCTC 11168)</name>
    <dbReference type="NCBI Taxonomy" id="192222"/>
    <lineage>
        <taxon>Bacteria</taxon>
        <taxon>Pseudomonadati</taxon>
        <taxon>Campylobacterota</taxon>
        <taxon>Epsilonproteobacteria</taxon>
        <taxon>Campylobacterales</taxon>
        <taxon>Campylobacteraceae</taxon>
        <taxon>Campylobacter</taxon>
    </lineage>
</organism>
<evidence type="ECO:0000255" key="1">
    <source>
        <dbReference type="HAMAP-Rule" id="MF_01322"/>
    </source>
</evidence>
<dbReference type="EC" id="2.7.7.6" evidence="1"/>
<dbReference type="EMBL" id="AL111168">
    <property type="protein sequence ID" value="CAL34627.1"/>
    <property type="molecule type" value="Genomic_DNA"/>
</dbReference>
<dbReference type="PIR" id="B81393">
    <property type="entry name" value="B81393"/>
</dbReference>
<dbReference type="RefSeq" id="WP_002858508.1">
    <property type="nucleotide sequence ID" value="NZ_SZUC01000002.1"/>
</dbReference>
<dbReference type="RefSeq" id="YP_002343913.1">
    <property type="nucleotide sequence ID" value="NC_002163.1"/>
</dbReference>
<dbReference type="SMR" id="Q9PI30"/>
<dbReference type="STRING" id="192222.Cj0479"/>
<dbReference type="PaxDb" id="192222-Cj0479"/>
<dbReference type="EnsemblBacteria" id="CAL34627">
    <property type="protein sequence ID" value="CAL34627"/>
    <property type="gene ID" value="Cj0479"/>
</dbReference>
<dbReference type="GeneID" id="904807"/>
<dbReference type="KEGG" id="cje:Cj0479"/>
<dbReference type="PATRIC" id="fig|192222.6.peg.471"/>
<dbReference type="eggNOG" id="COG0086">
    <property type="taxonomic scope" value="Bacteria"/>
</dbReference>
<dbReference type="HOGENOM" id="CLU_000524_3_1_7"/>
<dbReference type="OrthoDB" id="9815296at2"/>
<dbReference type="Proteomes" id="UP000000799">
    <property type="component" value="Chromosome"/>
</dbReference>
<dbReference type="GO" id="GO:0000428">
    <property type="term" value="C:DNA-directed RNA polymerase complex"/>
    <property type="evidence" value="ECO:0007669"/>
    <property type="project" value="UniProtKB-KW"/>
</dbReference>
<dbReference type="GO" id="GO:0003677">
    <property type="term" value="F:DNA binding"/>
    <property type="evidence" value="ECO:0007669"/>
    <property type="project" value="UniProtKB-UniRule"/>
</dbReference>
<dbReference type="GO" id="GO:0003899">
    <property type="term" value="F:DNA-directed RNA polymerase activity"/>
    <property type="evidence" value="ECO:0007669"/>
    <property type="project" value="UniProtKB-UniRule"/>
</dbReference>
<dbReference type="GO" id="GO:0000287">
    <property type="term" value="F:magnesium ion binding"/>
    <property type="evidence" value="ECO:0007669"/>
    <property type="project" value="UniProtKB-UniRule"/>
</dbReference>
<dbReference type="GO" id="GO:0008270">
    <property type="term" value="F:zinc ion binding"/>
    <property type="evidence" value="ECO:0007669"/>
    <property type="project" value="UniProtKB-UniRule"/>
</dbReference>
<dbReference type="GO" id="GO:0006351">
    <property type="term" value="P:DNA-templated transcription"/>
    <property type="evidence" value="ECO:0007669"/>
    <property type="project" value="UniProtKB-UniRule"/>
</dbReference>
<dbReference type="CDD" id="cd02655">
    <property type="entry name" value="RNAP_beta'_C"/>
    <property type="match status" value="1"/>
</dbReference>
<dbReference type="CDD" id="cd01609">
    <property type="entry name" value="RNAP_beta'_N"/>
    <property type="match status" value="1"/>
</dbReference>
<dbReference type="FunFam" id="1.10.132.30:FF:000003">
    <property type="entry name" value="DNA-directed RNA polymerase subunit beta"/>
    <property type="match status" value="1"/>
</dbReference>
<dbReference type="Gene3D" id="1.10.132.30">
    <property type="match status" value="1"/>
</dbReference>
<dbReference type="Gene3D" id="1.10.150.390">
    <property type="match status" value="1"/>
</dbReference>
<dbReference type="Gene3D" id="1.10.1790.20">
    <property type="match status" value="1"/>
</dbReference>
<dbReference type="Gene3D" id="1.10.40.90">
    <property type="match status" value="1"/>
</dbReference>
<dbReference type="Gene3D" id="2.40.40.20">
    <property type="match status" value="1"/>
</dbReference>
<dbReference type="Gene3D" id="2.40.50.100">
    <property type="match status" value="3"/>
</dbReference>
<dbReference type="Gene3D" id="4.10.860.120">
    <property type="entry name" value="RNA polymerase II, clamp domain"/>
    <property type="match status" value="1"/>
</dbReference>
<dbReference type="Gene3D" id="1.10.274.100">
    <property type="entry name" value="RNA polymerase Rpb1, domain 3"/>
    <property type="match status" value="1"/>
</dbReference>
<dbReference type="HAMAP" id="MF_01322">
    <property type="entry name" value="RNApol_bact_RpoC"/>
    <property type="match status" value="1"/>
</dbReference>
<dbReference type="InterPro" id="IPR045867">
    <property type="entry name" value="DNA-dir_RpoC_beta_prime"/>
</dbReference>
<dbReference type="InterPro" id="IPR012754">
    <property type="entry name" value="DNA-dir_RpoC_beta_prime_bact"/>
</dbReference>
<dbReference type="InterPro" id="IPR000722">
    <property type="entry name" value="RNA_pol_asu"/>
</dbReference>
<dbReference type="InterPro" id="IPR006592">
    <property type="entry name" value="RNA_pol_N"/>
</dbReference>
<dbReference type="InterPro" id="IPR007080">
    <property type="entry name" value="RNA_pol_Rpb1_1"/>
</dbReference>
<dbReference type="InterPro" id="IPR007066">
    <property type="entry name" value="RNA_pol_Rpb1_3"/>
</dbReference>
<dbReference type="InterPro" id="IPR042102">
    <property type="entry name" value="RNA_pol_Rpb1_3_sf"/>
</dbReference>
<dbReference type="InterPro" id="IPR007083">
    <property type="entry name" value="RNA_pol_Rpb1_4"/>
</dbReference>
<dbReference type="InterPro" id="IPR007081">
    <property type="entry name" value="RNA_pol_Rpb1_5"/>
</dbReference>
<dbReference type="InterPro" id="IPR044893">
    <property type="entry name" value="RNA_pol_Rpb1_clamp_domain"/>
</dbReference>
<dbReference type="InterPro" id="IPR038120">
    <property type="entry name" value="Rpb1_funnel_sf"/>
</dbReference>
<dbReference type="NCBIfam" id="TIGR02386">
    <property type="entry name" value="rpoC_TIGR"/>
    <property type="match status" value="1"/>
</dbReference>
<dbReference type="PANTHER" id="PTHR19376">
    <property type="entry name" value="DNA-DIRECTED RNA POLYMERASE"/>
    <property type="match status" value="1"/>
</dbReference>
<dbReference type="PANTHER" id="PTHR19376:SF54">
    <property type="entry name" value="DNA-DIRECTED RNA POLYMERASE SUBUNIT BETA"/>
    <property type="match status" value="1"/>
</dbReference>
<dbReference type="Pfam" id="PF04997">
    <property type="entry name" value="RNA_pol_Rpb1_1"/>
    <property type="match status" value="1"/>
</dbReference>
<dbReference type="Pfam" id="PF00623">
    <property type="entry name" value="RNA_pol_Rpb1_2"/>
    <property type="match status" value="2"/>
</dbReference>
<dbReference type="Pfam" id="PF04983">
    <property type="entry name" value="RNA_pol_Rpb1_3"/>
    <property type="match status" value="1"/>
</dbReference>
<dbReference type="Pfam" id="PF05000">
    <property type="entry name" value="RNA_pol_Rpb1_4"/>
    <property type="match status" value="1"/>
</dbReference>
<dbReference type="Pfam" id="PF04998">
    <property type="entry name" value="RNA_pol_Rpb1_5"/>
    <property type="match status" value="1"/>
</dbReference>
<dbReference type="SMART" id="SM00663">
    <property type="entry name" value="RPOLA_N"/>
    <property type="match status" value="1"/>
</dbReference>
<dbReference type="SUPFAM" id="SSF64484">
    <property type="entry name" value="beta and beta-prime subunits of DNA dependent RNA-polymerase"/>
    <property type="match status" value="1"/>
</dbReference>
<accession>Q9PI30</accession>
<accession>Q0PB34</accession>
<gene>
    <name evidence="1" type="primary">rpoC</name>
    <name type="ordered locus">Cj0479</name>
</gene>
<feature type="chain" id="PRO_0000067723" description="DNA-directed RNA polymerase subunit beta'">
    <location>
        <begin position="1"/>
        <end position="1517"/>
    </location>
</feature>
<feature type="binding site" evidence="1">
    <location>
        <position position="71"/>
    </location>
    <ligand>
        <name>Zn(2+)</name>
        <dbReference type="ChEBI" id="CHEBI:29105"/>
        <label>1</label>
    </ligand>
</feature>
<feature type="binding site" evidence="1">
    <location>
        <position position="73"/>
    </location>
    <ligand>
        <name>Zn(2+)</name>
        <dbReference type="ChEBI" id="CHEBI:29105"/>
        <label>1</label>
    </ligand>
</feature>
<feature type="binding site" evidence="1">
    <location>
        <position position="86"/>
    </location>
    <ligand>
        <name>Zn(2+)</name>
        <dbReference type="ChEBI" id="CHEBI:29105"/>
        <label>1</label>
    </ligand>
</feature>
<feature type="binding site" evidence="1">
    <location>
        <position position="89"/>
    </location>
    <ligand>
        <name>Zn(2+)</name>
        <dbReference type="ChEBI" id="CHEBI:29105"/>
        <label>1</label>
    </ligand>
</feature>
<feature type="binding site" evidence="1">
    <location>
        <position position="482"/>
    </location>
    <ligand>
        <name>Mg(2+)</name>
        <dbReference type="ChEBI" id="CHEBI:18420"/>
    </ligand>
</feature>
<feature type="binding site" evidence="1">
    <location>
        <position position="484"/>
    </location>
    <ligand>
        <name>Mg(2+)</name>
        <dbReference type="ChEBI" id="CHEBI:18420"/>
    </ligand>
</feature>
<feature type="binding site" evidence="1">
    <location>
        <position position="486"/>
    </location>
    <ligand>
        <name>Mg(2+)</name>
        <dbReference type="ChEBI" id="CHEBI:18420"/>
    </ligand>
</feature>
<feature type="binding site" evidence="1">
    <location>
        <position position="812"/>
    </location>
    <ligand>
        <name>Zn(2+)</name>
        <dbReference type="ChEBI" id="CHEBI:29105"/>
        <label>2</label>
    </ligand>
</feature>
<feature type="binding site" evidence="1">
    <location>
        <position position="886"/>
    </location>
    <ligand>
        <name>Zn(2+)</name>
        <dbReference type="ChEBI" id="CHEBI:29105"/>
        <label>2</label>
    </ligand>
</feature>
<feature type="binding site" evidence="1">
    <location>
        <position position="893"/>
    </location>
    <ligand>
        <name>Zn(2+)</name>
        <dbReference type="ChEBI" id="CHEBI:29105"/>
        <label>2</label>
    </ligand>
</feature>
<feature type="binding site" evidence="1">
    <location>
        <position position="896"/>
    </location>
    <ligand>
        <name>Zn(2+)</name>
        <dbReference type="ChEBI" id="CHEBI:29105"/>
        <label>2</label>
    </ligand>
</feature>
<keyword id="KW-0240">DNA-directed RNA polymerase</keyword>
<keyword id="KW-0460">Magnesium</keyword>
<keyword id="KW-0479">Metal-binding</keyword>
<keyword id="KW-0548">Nucleotidyltransferase</keyword>
<keyword id="KW-1185">Reference proteome</keyword>
<keyword id="KW-0804">Transcription</keyword>
<keyword id="KW-0808">Transferase</keyword>
<keyword id="KW-0862">Zinc</keyword>
<sequence length="1517" mass="168823">MSKFKVIEIKEDARPRDFEAFQLRLASPEKIKSWSYGEVKKPETINYRTLKPERDGLFCAKIFGPIRDYECLCGKYKKMRFKGVKCEKCGVEVANSKVRRSRMGHIELVTPVAHIWYVNSLPSRIGTLLGVKMKDLERVLYYEAYIVENPGDAFYDNESTKKVEYCDVLNEEQYQNLMQRYENSGFKARMGGEVVRDLLANLDLVALLNQLKEEMGATNSEAKKKTIIKRLKVVENFLNSNLNANTDSDEAVPNRPEWMMITNLPVLPPDLRPLVALDGGKFAVSDVNDLYRRVINRNTRLKKLMELDAPEIIIRNEKRMLQEAVDALFDNGRRANAVKGANKRPLKSLSEIIKGKQGRFRQNLLGKRVDFSGRSVIVVGPKLRMDQCGLPKKMALELFKPHLLAKLEEKGYATTVKQAKKMIENKTNEVWECLEEVVKGHPVMLNRAPTLHKLSIQAFHPVLVEGKAIQLHPLVCAAFNADFDGDQMAVHVPLSQEAIAECKVLMLSSMNILLPASGKSVTVPSQDMVLGIYYLSLEKAGAKGSHKICTGIDEVMMALESKCLDIHASIQTMVDGRKITTTAGRLIVKSILPDFVPENSWNKVLKKKDIAALVDYVYKQGGLEITASFLDRLKNLGFEYATKAGISISIADIIVPNDKQKAIDEAKKQVREIQNSYNLGLITSGERYNKIIDIWKSTNNVLSKEMMKLVEKDKEGFNSIYMMADSGARGSAAQISQLAAMRGLMTKPDGSIIETPIISNFREGLNVLEYFISTHGARKGLADTALKTANAGYLTRKLIDVAQNVKITIEDCGTHEGVEINEITADSSIIETLEERILGRVLAEDVIDPITNSVLFAEGTLMDEEKAKILGESGIKSVNIRTPITCKAKKGICAKCYGINLGEGKLVKPGEAVGIISAQSIGEPGTQLTLRTFHSGGTASTDLQDRQVSAQKEGFIRFYNLKTYKNKEGKNIVANRRNAAVLLVEPKIKTPFKGVINIENIHEDVIVSIKDKKQEVKYILRKYDLAKPNELAGVSGSIDGKLYLPYQSGMQVEENESIVEVIKEGWNVPNRIPFASEILVEDGEPVVQNIKAGEKGTLKFYILKGDGLDRVKNVKKGDIVKEKGFFVVIADENDREAKRHYIPRESKIEFNDSEKIDDANTIIASAPKKERKVIAEWDAYNNTIIAEIDGVVSFEDIEAGYSADEQIDEATGKRSLVINEYLPSGVRPTLVIAGKGDKAVRYHLEPKTVIFVHDGDKIAQADILAKTPKAAAKSKDITGGLPRVSELFEARKPKNAAVIAEIDGVVRFDKPLRSKERIIIQAEDGTSAEYLIDKSKHIQVRDGEFIHAGEKLTDGVVSSHDVLKILGEKALHYYLISEIQQVYRGQGVVISDKHIEVIVSQMLRQVKVVDSGHTKFIEGDLVSRRKFREENERIIRMGGEPAIAEPVLLGVTRAAIGSDSVISAASFQETTKVLTEASIAGKFDYLEDLKENVILGRMIPVGTGLYGEQNLKLKEQE</sequence>